<proteinExistence type="evidence at transcript level"/>
<reference key="1">
    <citation type="submission" date="2001-07" db="EMBL/GenBank/DDBJ databases">
        <title>Genome-wide discovery and analysis of human seven transmembrane helix receptor genes.</title>
        <authorList>
            <person name="Suwa M."/>
            <person name="Sato T."/>
            <person name="Okouchi I."/>
            <person name="Arita M."/>
            <person name="Futami K."/>
            <person name="Matsumoto S."/>
            <person name="Tsutsumi S."/>
            <person name="Aburatani H."/>
            <person name="Asai K."/>
            <person name="Akiyama Y."/>
        </authorList>
    </citation>
    <scope>NUCLEOTIDE SEQUENCE [GENOMIC DNA]</scope>
</reference>
<reference key="2">
    <citation type="submission" date="2005-07" db="EMBL/GenBank/DDBJ databases">
        <authorList>
            <person name="Mural R.J."/>
            <person name="Istrail S."/>
            <person name="Sutton G.G."/>
            <person name="Florea L."/>
            <person name="Halpern A.L."/>
            <person name="Mobarry C.M."/>
            <person name="Lippert R."/>
            <person name="Walenz B."/>
            <person name="Shatkay H."/>
            <person name="Dew I."/>
            <person name="Miller J.R."/>
            <person name="Flanigan M.J."/>
            <person name="Edwards N.J."/>
            <person name="Bolanos R."/>
            <person name="Fasulo D."/>
            <person name="Halldorsson B.V."/>
            <person name="Hannenhalli S."/>
            <person name="Turner R."/>
            <person name="Yooseph S."/>
            <person name="Lu F."/>
            <person name="Nusskern D.R."/>
            <person name="Shue B.C."/>
            <person name="Zheng X.H."/>
            <person name="Zhong F."/>
            <person name="Delcher A.L."/>
            <person name="Huson D.H."/>
            <person name="Kravitz S.A."/>
            <person name="Mouchard L."/>
            <person name="Reinert K."/>
            <person name="Remington K.A."/>
            <person name="Clark A.G."/>
            <person name="Waterman M.S."/>
            <person name="Eichler E.E."/>
            <person name="Adams M.D."/>
            <person name="Hunkapiller M.W."/>
            <person name="Myers E.W."/>
            <person name="Venter J.C."/>
        </authorList>
    </citation>
    <scope>NUCLEOTIDE SEQUENCE [LARGE SCALE GENOMIC DNA]</scope>
</reference>
<reference key="3">
    <citation type="journal article" date="2004" name="Genome Res.">
        <title>The status, quality, and expansion of the NIH full-length cDNA project: the Mammalian Gene Collection (MGC).</title>
        <authorList>
            <consortium name="The MGC Project Team"/>
        </authorList>
    </citation>
    <scope>NUCLEOTIDE SEQUENCE [LARGE SCALE MRNA]</scope>
    <source>
        <tissue>Testis</tissue>
    </source>
</reference>
<reference key="4">
    <citation type="journal article" date="2004" name="Proc. Natl. Acad. Sci. U.S.A.">
        <title>The human olfactory receptor gene family.</title>
        <authorList>
            <person name="Malnic B."/>
            <person name="Godfrey P.A."/>
            <person name="Buck L.B."/>
        </authorList>
    </citation>
    <scope>IDENTIFICATION</scope>
</reference>
<reference key="5">
    <citation type="journal article" date="2004" name="Proc. Natl. Acad. Sci. U.S.A.">
        <authorList>
            <person name="Malnic B."/>
            <person name="Godfrey P.A."/>
            <person name="Buck L.B."/>
        </authorList>
    </citation>
    <scope>ERRATUM OF PUBMED:14983052</scope>
</reference>
<name>OR6X1_HUMAN</name>
<evidence type="ECO:0000255" key="1"/>
<evidence type="ECO:0000255" key="2">
    <source>
        <dbReference type="PROSITE-ProRule" id="PRU00521"/>
    </source>
</evidence>
<evidence type="ECO:0000305" key="3"/>
<feature type="chain" id="PRO_0000150640" description="Olfactory receptor 6X1">
    <location>
        <begin position="1"/>
        <end position="312"/>
    </location>
</feature>
<feature type="topological domain" description="Extracellular" evidence="1">
    <location>
        <begin position="1"/>
        <end position="23"/>
    </location>
</feature>
<feature type="transmembrane region" description="Helical; Name=1" evidence="1">
    <location>
        <begin position="24"/>
        <end position="44"/>
    </location>
</feature>
<feature type="topological domain" description="Cytoplasmic" evidence="1">
    <location>
        <begin position="45"/>
        <end position="52"/>
    </location>
</feature>
<feature type="transmembrane region" description="Helical; Name=2" evidence="1">
    <location>
        <begin position="53"/>
        <end position="73"/>
    </location>
</feature>
<feature type="topological domain" description="Extracellular" evidence="1">
    <location>
        <begin position="74"/>
        <end position="97"/>
    </location>
</feature>
<feature type="transmembrane region" description="Helical; Name=3" evidence="1">
    <location>
        <begin position="98"/>
        <end position="118"/>
    </location>
</feature>
<feature type="topological domain" description="Cytoplasmic" evidence="1">
    <location>
        <begin position="119"/>
        <end position="137"/>
    </location>
</feature>
<feature type="transmembrane region" description="Helical; Name=4" evidence="1">
    <location>
        <begin position="138"/>
        <end position="158"/>
    </location>
</feature>
<feature type="topological domain" description="Extracellular" evidence="1">
    <location>
        <begin position="159"/>
        <end position="195"/>
    </location>
</feature>
<feature type="transmembrane region" description="Helical; Name=5" evidence="1">
    <location>
        <begin position="196"/>
        <end position="215"/>
    </location>
</feature>
<feature type="topological domain" description="Cytoplasmic" evidence="1">
    <location>
        <begin position="216"/>
        <end position="235"/>
    </location>
</feature>
<feature type="transmembrane region" description="Helical; Name=6" evidence="1">
    <location>
        <begin position="236"/>
        <end position="256"/>
    </location>
</feature>
<feature type="topological domain" description="Extracellular" evidence="1">
    <location>
        <begin position="257"/>
        <end position="269"/>
    </location>
</feature>
<feature type="transmembrane region" description="Helical; Name=7" evidence="1">
    <location>
        <begin position="270"/>
        <end position="290"/>
    </location>
</feature>
<feature type="topological domain" description="Cytoplasmic" evidence="1">
    <location>
        <begin position="291"/>
        <end position="312"/>
    </location>
</feature>
<feature type="glycosylation site" description="N-linked (GlcNAc...) asparagine" evidence="1">
    <location>
        <position position="3"/>
    </location>
</feature>
<feature type="disulfide bond" evidence="2">
    <location>
        <begin position="95"/>
        <end position="187"/>
    </location>
</feature>
<feature type="sequence variant" id="VAR_024110" description="In dbSNP:rs12364099.">
    <original>T</original>
    <variation>N</variation>
    <location>
        <position position="190"/>
    </location>
</feature>
<organism>
    <name type="scientific">Homo sapiens</name>
    <name type="common">Human</name>
    <dbReference type="NCBI Taxonomy" id="9606"/>
    <lineage>
        <taxon>Eukaryota</taxon>
        <taxon>Metazoa</taxon>
        <taxon>Chordata</taxon>
        <taxon>Craniata</taxon>
        <taxon>Vertebrata</taxon>
        <taxon>Euteleostomi</taxon>
        <taxon>Mammalia</taxon>
        <taxon>Eutheria</taxon>
        <taxon>Euarchontoglires</taxon>
        <taxon>Primates</taxon>
        <taxon>Haplorrhini</taxon>
        <taxon>Catarrhini</taxon>
        <taxon>Hominidae</taxon>
        <taxon>Homo</taxon>
    </lineage>
</organism>
<accession>Q8NH79</accession>
<accession>B9EGW9</accession>
<accession>Q6IFA0</accession>
<gene>
    <name type="primary">OR6X1</name>
</gene>
<keyword id="KW-1003">Cell membrane</keyword>
<keyword id="KW-1015">Disulfide bond</keyword>
<keyword id="KW-0297">G-protein coupled receptor</keyword>
<keyword id="KW-0325">Glycoprotein</keyword>
<keyword id="KW-0472">Membrane</keyword>
<keyword id="KW-0552">Olfaction</keyword>
<keyword id="KW-0675">Receptor</keyword>
<keyword id="KW-1185">Reference proteome</keyword>
<keyword id="KW-0716">Sensory transduction</keyword>
<keyword id="KW-0807">Transducer</keyword>
<keyword id="KW-0812">Transmembrane</keyword>
<keyword id="KW-1133">Transmembrane helix</keyword>
<protein>
    <recommendedName>
        <fullName>Olfactory receptor 6X1</fullName>
    </recommendedName>
    <alternativeName>
        <fullName>Olfactory receptor OR11-270</fullName>
    </alternativeName>
</protein>
<sequence length="312" mass="34727">MRNGTVITEFILLGFPVIQGLQTPLFIAIFLTYILTLAGNGLIIATVWAEPRLQIPMYFFLCNLSFLEIWYTTTVIPKLLGTFVVARTVICMSCCLLQAFFHFFVGTTEFLILTIMSFDRYLTICNPLHHPTIMTSKLCLQLALSSWVVGFTIVFCQTMLLIQLPFCGNNVISHFYCDVGPSLKAACIDTSILELLGVIATILVIPGSLLFNMISYIYILSAILRIPSATGHQKTFSTCASHLTVVSLLYGAVLFMYLRPTAHSSFKINKVVSVLNTILTPLLNPFIYTIRNKEVKGALRKAMTCPKTGHAK</sequence>
<dbReference type="EMBL" id="AB065510">
    <property type="protein sequence ID" value="BAC05758.1"/>
    <property type="molecule type" value="Genomic_DNA"/>
</dbReference>
<dbReference type="EMBL" id="CH471065">
    <property type="protein sequence ID" value="EAW67555.1"/>
    <property type="molecule type" value="Genomic_DNA"/>
</dbReference>
<dbReference type="EMBL" id="BC136855">
    <property type="protein sequence ID" value="AAI36856.1"/>
    <property type="molecule type" value="mRNA"/>
</dbReference>
<dbReference type="EMBL" id="BC136856">
    <property type="protein sequence ID" value="AAI36857.1"/>
    <property type="molecule type" value="mRNA"/>
</dbReference>
<dbReference type="EMBL" id="BK004362">
    <property type="protein sequence ID" value="DAA04760.1"/>
    <property type="molecule type" value="Genomic_DNA"/>
</dbReference>
<dbReference type="CCDS" id="CCDS31695.1"/>
<dbReference type="RefSeq" id="NP_001005188.1">
    <property type="nucleotide sequence ID" value="NM_001005188.1"/>
</dbReference>
<dbReference type="SMR" id="Q8NH79"/>
<dbReference type="BioGRID" id="133476">
    <property type="interactions" value="1"/>
</dbReference>
<dbReference type="FunCoup" id="Q8NH79">
    <property type="interactions" value="417"/>
</dbReference>
<dbReference type="IntAct" id="Q8NH79">
    <property type="interactions" value="1"/>
</dbReference>
<dbReference type="STRING" id="9606.ENSP00000333724"/>
<dbReference type="GlyCosmos" id="Q8NH79">
    <property type="glycosylation" value="1 site, No reported glycans"/>
</dbReference>
<dbReference type="GlyGen" id="Q8NH79">
    <property type="glycosylation" value="1 site"/>
</dbReference>
<dbReference type="iPTMnet" id="Q8NH79"/>
<dbReference type="PhosphoSitePlus" id="Q8NH79"/>
<dbReference type="BioMuta" id="OR6X1"/>
<dbReference type="DMDM" id="38372825"/>
<dbReference type="jPOST" id="Q8NH79"/>
<dbReference type="PaxDb" id="9606-ENSP00000333724"/>
<dbReference type="PeptideAtlas" id="Q8NH79"/>
<dbReference type="Antibodypedia" id="67317">
    <property type="antibodies" value="61 antibodies from 16 providers"/>
</dbReference>
<dbReference type="DNASU" id="390260"/>
<dbReference type="Ensembl" id="ENST00000327930.3">
    <property type="protein sequence ID" value="ENSP00000333724.2"/>
    <property type="gene ID" value="ENSG00000221931.3"/>
</dbReference>
<dbReference type="GeneID" id="390260"/>
<dbReference type="KEGG" id="hsa:390260"/>
<dbReference type="MANE-Select" id="ENST00000327930.3">
    <property type="protein sequence ID" value="ENSP00000333724.2"/>
    <property type="RefSeq nucleotide sequence ID" value="NM_001005188.1"/>
    <property type="RefSeq protein sequence ID" value="NP_001005188.1"/>
</dbReference>
<dbReference type="UCSC" id="uc010rzy.3">
    <property type="organism name" value="human"/>
</dbReference>
<dbReference type="AGR" id="HGNC:14737"/>
<dbReference type="CTD" id="390260"/>
<dbReference type="DisGeNET" id="390260"/>
<dbReference type="GeneCards" id="OR6X1"/>
<dbReference type="HGNC" id="HGNC:14737">
    <property type="gene designation" value="OR6X1"/>
</dbReference>
<dbReference type="HPA" id="ENSG00000221931">
    <property type="expression patterns" value="Not detected"/>
</dbReference>
<dbReference type="neXtProt" id="NX_Q8NH79"/>
<dbReference type="OpenTargets" id="ENSG00000221931"/>
<dbReference type="PharmGKB" id="PA32609"/>
<dbReference type="VEuPathDB" id="HostDB:ENSG00000221931"/>
<dbReference type="eggNOG" id="ENOG502SIF0">
    <property type="taxonomic scope" value="Eukaryota"/>
</dbReference>
<dbReference type="GeneTree" id="ENSGT01130000278306"/>
<dbReference type="HOGENOM" id="CLU_012526_1_1_1"/>
<dbReference type="InParanoid" id="Q8NH79"/>
<dbReference type="OMA" id="KAMTCPK"/>
<dbReference type="OrthoDB" id="5967130at2759"/>
<dbReference type="PAN-GO" id="Q8NH79">
    <property type="GO annotations" value="1 GO annotation based on evolutionary models"/>
</dbReference>
<dbReference type="PhylomeDB" id="Q8NH79"/>
<dbReference type="TreeFam" id="TF337475"/>
<dbReference type="PathwayCommons" id="Q8NH79"/>
<dbReference type="Reactome" id="R-HSA-9752946">
    <property type="pathway name" value="Expression and translocation of olfactory receptors"/>
</dbReference>
<dbReference type="SignaLink" id="Q8NH79"/>
<dbReference type="BioGRID-ORCS" id="390260">
    <property type="hits" value="9 hits in 743 CRISPR screens"/>
</dbReference>
<dbReference type="GeneWiki" id="OR6X1"/>
<dbReference type="GenomeRNAi" id="390260"/>
<dbReference type="Pharos" id="Q8NH79">
    <property type="development level" value="Tdark"/>
</dbReference>
<dbReference type="PRO" id="PR:Q8NH79"/>
<dbReference type="Proteomes" id="UP000005640">
    <property type="component" value="Chromosome 11"/>
</dbReference>
<dbReference type="RNAct" id="Q8NH79">
    <property type="molecule type" value="protein"/>
</dbReference>
<dbReference type="ExpressionAtlas" id="Q8NH79">
    <property type="expression patterns" value="baseline and differential"/>
</dbReference>
<dbReference type="GO" id="GO:0005886">
    <property type="term" value="C:plasma membrane"/>
    <property type="evidence" value="ECO:0007669"/>
    <property type="project" value="UniProtKB-SubCell"/>
</dbReference>
<dbReference type="GO" id="GO:0004930">
    <property type="term" value="F:G protein-coupled receptor activity"/>
    <property type="evidence" value="ECO:0007669"/>
    <property type="project" value="UniProtKB-KW"/>
</dbReference>
<dbReference type="GO" id="GO:0004984">
    <property type="term" value="F:olfactory receptor activity"/>
    <property type="evidence" value="ECO:0000318"/>
    <property type="project" value="GO_Central"/>
</dbReference>
<dbReference type="CDD" id="cd15912">
    <property type="entry name" value="7tmA_OR6C-like"/>
    <property type="match status" value="1"/>
</dbReference>
<dbReference type="FunFam" id="1.20.1070.10:FF:000010">
    <property type="entry name" value="Olfactory receptor"/>
    <property type="match status" value="1"/>
</dbReference>
<dbReference type="Gene3D" id="1.20.1070.10">
    <property type="entry name" value="Rhodopsin 7-helix transmembrane proteins"/>
    <property type="match status" value="1"/>
</dbReference>
<dbReference type="InterPro" id="IPR000276">
    <property type="entry name" value="GPCR_Rhodpsn"/>
</dbReference>
<dbReference type="InterPro" id="IPR017452">
    <property type="entry name" value="GPCR_Rhodpsn_7TM"/>
</dbReference>
<dbReference type="InterPro" id="IPR000725">
    <property type="entry name" value="Olfact_rcpt"/>
</dbReference>
<dbReference type="InterPro" id="IPR047132">
    <property type="entry name" value="Olfact_rcpt_6C-like"/>
</dbReference>
<dbReference type="PANTHER" id="PTHR26454">
    <property type="entry name" value="OLFACTORY RECEPTOR"/>
    <property type="match status" value="1"/>
</dbReference>
<dbReference type="PANTHER" id="PTHR26454:SF30">
    <property type="entry name" value="OLFACTORY RECEPTOR 6X1"/>
    <property type="match status" value="1"/>
</dbReference>
<dbReference type="Pfam" id="PF13853">
    <property type="entry name" value="7tm_4"/>
    <property type="match status" value="1"/>
</dbReference>
<dbReference type="PRINTS" id="PR00237">
    <property type="entry name" value="GPCRRHODOPSN"/>
</dbReference>
<dbReference type="PRINTS" id="PR00245">
    <property type="entry name" value="OLFACTORYR"/>
</dbReference>
<dbReference type="SUPFAM" id="SSF81321">
    <property type="entry name" value="Family A G protein-coupled receptor-like"/>
    <property type="match status" value="1"/>
</dbReference>
<dbReference type="PROSITE" id="PS00237">
    <property type="entry name" value="G_PROTEIN_RECEP_F1_1"/>
    <property type="match status" value="1"/>
</dbReference>
<dbReference type="PROSITE" id="PS50262">
    <property type="entry name" value="G_PROTEIN_RECEP_F1_2"/>
    <property type="match status" value="1"/>
</dbReference>
<comment type="function">
    <text evidence="3">Odorant receptor.</text>
</comment>
<comment type="subcellular location">
    <subcellularLocation>
        <location>Cell membrane</location>
        <topology>Multi-pass membrane protein</topology>
    </subcellularLocation>
</comment>
<comment type="similarity">
    <text evidence="2">Belongs to the G-protein coupled receptor 1 family.</text>
</comment>
<comment type="online information" name="Human Olfactory Receptor Data Exploratorium (HORDE)">
    <link uri="http://genome.weizmann.ac.il/horde/card/index/symbol:OR6X1"/>
</comment>